<reference key="1">
    <citation type="submission" date="2008-02" db="EMBL/GenBank/DDBJ databases">
        <title>Complete sequence of Pseudomonas putida W619.</title>
        <authorList>
            <person name="Copeland A."/>
            <person name="Lucas S."/>
            <person name="Lapidus A."/>
            <person name="Barry K."/>
            <person name="Detter J.C."/>
            <person name="Glavina del Rio T."/>
            <person name="Dalin E."/>
            <person name="Tice H."/>
            <person name="Pitluck S."/>
            <person name="Chain P."/>
            <person name="Malfatti S."/>
            <person name="Shin M."/>
            <person name="Vergez L."/>
            <person name="Schmutz J."/>
            <person name="Larimer F."/>
            <person name="Land M."/>
            <person name="Hauser L."/>
            <person name="Kyrpides N."/>
            <person name="Kim E."/>
            <person name="Taghavi S."/>
            <person name="Vangronsveld D."/>
            <person name="van der Lelie D."/>
            <person name="Richardson P."/>
        </authorList>
    </citation>
    <scope>NUCLEOTIDE SEQUENCE [LARGE SCALE GENOMIC DNA]</scope>
    <source>
        <strain>W619</strain>
    </source>
</reference>
<name>EFTU_PSEPW</name>
<gene>
    <name evidence="2" type="primary">tuf1</name>
    <name type="ordered locus">PputW619_4751</name>
</gene>
<gene>
    <name evidence="2" type="primary">tuf2</name>
    <name type="ordered locus">PputW619_4763</name>
</gene>
<evidence type="ECO:0000250" key="1"/>
<evidence type="ECO:0000255" key="2">
    <source>
        <dbReference type="HAMAP-Rule" id="MF_00118"/>
    </source>
</evidence>
<protein>
    <recommendedName>
        <fullName evidence="2">Elongation factor Tu</fullName>
        <shortName evidence="2">EF-Tu</shortName>
        <ecNumber evidence="2">3.6.5.3</ecNumber>
    </recommendedName>
</protein>
<feature type="chain" id="PRO_0000337476" description="Elongation factor Tu">
    <location>
        <begin position="1"/>
        <end position="397"/>
    </location>
</feature>
<feature type="domain" description="tr-type G">
    <location>
        <begin position="10"/>
        <end position="207"/>
    </location>
</feature>
<feature type="region of interest" description="G1" evidence="1">
    <location>
        <begin position="19"/>
        <end position="26"/>
    </location>
</feature>
<feature type="region of interest" description="G2" evidence="1">
    <location>
        <begin position="60"/>
        <end position="64"/>
    </location>
</feature>
<feature type="region of interest" description="G3" evidence="1">
    <location>
        <begin position="81"/>
        <end position="84"/>
    </location>
</feature>
<feature type="region of interest" description="G4" evidence="1">
    <location>
        <begin position="136"/>
        <end position="139"/>
    </location>
</feature>
<feature type="region of interest" description="G5" evidence="1">
    <location>
        <begin position="174"/>
        <end position="176"/>
    </location>
</feature>
<feature type="binding site" evidence="2">
    <location>
        <begin position="19"/>
        <end position="26"/>
    </location>
    <ligand>
        <name>GTP</name>
        <dbReference type="ChEBI" id="CHEBI:37565"/>
    </ligand>
</feature>
<feature type="binding site" evidence="2">
    <location>
        <position position="26"/>
    </location>
    <ligand>
        <name>Mg(2+)</name>
        <dbReference type="ChEBI" id="CHEBI:18420"/>
    </ligand>
</feature>
<feature type="binding site" evidence="2">
    <location>
        <begin position="81"/>
        <end position="85"/>
    </location>
    <ligand>
        <name>GTP</name>
        <dbReference type="ChEBI" id="CHEBI:37565"/>
    </ligand>
</feature>
<feature type="binding site" evidence="2">
    <location>
        <begin position="136"/>
        <end position="139"/>
    </location>
    <ligand>
        <name>GTP</name>
        <dbReference type="ChEBI" id="CHEBI:37565"/>
    </ligand>
</feature>
<comment type="function">
    <text evidence="2">GTP hydrolase that promotes the GTP-dependent binding of aminoacyl-tRNA to the A-site of ribosomes during protein biosynthesis.</text>
</comment>
<comment type="catalytic activity">
    <reaction evidence="2">
        <text>GTP + H2O = GDP + phosphate + H(+)</text>
        <dbReference type="Rhea" id="RHEA:19669"/>
        <dbReference type="ChEBI" id="CHEBI:15377"/>
        <dbReference type="ChEBI" id="CHEBI:15378"/>
        <dbReference type="ChEBI" id="CHEBI:37565"/>
        <dbReference type="ChEBI" id="CHEBI:43474"/>
        <dbReference type="ChEBI" id="CHEBI:58189"/>
        <dbReference type="EC" id="3.6.5.3"/>
    </reaction>
    <physiologicalReaction direction="left-to-right" evidence="2">
        <dbReference type="Rhea" id="RHEA:19670"/>
    </physiologicalReaction>
</comment>
<comment type="subunit">
    <text evidence="2">Monomer.</text>
</comment>
<comment type="subcellular location">
    <subcellularLocation>
        <location evidence="2">Cytoplasm</location>
    </subcellularLocation>
</comment>
<comment type="similarity">
    <text evidence="2">Belongs to the TRAFAC class translation factor GTPase superfamily. Classic translation factor GTPase family. EF-Tu/EF-1A subfamily.</text>
</comment>
<dbReference type="EC" id="3.6.5.3" evidence="2"/>
<dbReference type="EMBL" id="CP000949">
    <property type="protein sequence ID" value="ACA75227.1"/>
    <property type="molecule type" value="Genomic_DNA"/>
</dbReference>
<dbReference type="EMBL" id="CP000949">
    <property type="protein sequence ID" value="ACA75239.1"/>
    <property type="molecule type" value="Genomic_DNA"/>
</dbReference>
<dbReference type="SMR" id="B1JDW6"/>
<dbReference type="STRING" id="390235.PputW619_4751"/>
<dbReference type="KEGG" id="ppw:PputW619_4751"/>
<dbReference type="KEGG" id="ppw:PputW619_4763"/>
<dbReference type="eggNOG" id="COG0050">
    <property type="taxonomic scope" value="Bacteria"/>
</dbReference>
<dbReference type="HOGENOM" id="CLU_007265_0_0_6"/>
<dbReference type="OrthoDB" id="9803139at2"/>
<dbReference type="GO" id="GO:0005829">
    <property type="term" value="C:cytosol"/>
    <property type="evidence" value="ECO:0007669"/>
    <property type="project" value="TreeGrafter"/>
</dbReference>
<dbReference type="GO" id="GO:0005525">
    <property type="term" value="F:GTP binding"/>
    <property type="evidence" value="ECO:0007669"/>
    <property type="project" value="UniProtKB-UniRule"/>
</dbReference>
<dbReference type="GO" id="GO:0003924">
    <property type="term" value="F:GTPase activity"/>
    <property type="evidence" value="ECO:0007669"/>
    <property type="project" value="InterPro"/>
</dbReference>
<dbReference type="GO" id="GO:0097216">
    <property type="term" value="F:guanosine tetraphosphate binding"/>
    <property type="evidence" value="ECO:0007669"/>
    <property type="project" value="UniProtKB-ARBA"/>
</dbReference>
<dbReference type="GO" id="GO:0003746">
    <property type="term" value="F:translation elongation factor activity"/>
    <property type="evidence" value="ECO:0007669"/>
    <property type="project" value="UniProtKB-UniRule"/>
</dbReference>
<dbReference type="CDD" id="cd01884">
    <property type="entry name" value="EF_Tu"/>
    <property type="match status" value="1"/>
</dbReference>
<dbReference type="CDD" id="cd03697">
    <property type="entry name" value="EFTU_II"/>
    <property type="match status" value="1"/>
</dbReference>
<dbReference type="CDD" id="cd03707">
    <property type="entry name" value="EFTU_III"/>
    <property type="match status" value="1"/>
</dbReference>
<dbReference type="FunFam" id="2.40.30.10:FF:000001">
    <property type="entry name" value="Elongation factor Tu"/>
    <property type="match status" value="1"/>
</dbReference>
<dbReference type="FunFam" id="3.40.50.300:FF:000003">
    <property type="entry name" value="Elongation factor Tu"/>
    <property type="match status" value="1"/>
</dbReference>
<dbReference type="Gene3D" id="3.40.50.300">
    <property type="entry name" value="P-loop containing nucleotide triphosphate hydrolases"/>
    <property type="match status" value="1"/>
</dbReference>
<dbReference type="Gene3D" id="2.40.30.10">
    <property type="entry name" value="Translation factors"/>
    <property type="match status" value="2"/>
</dbReference>
<dbReference type="HAMAP" id="MF_00118_B">
    <property type="entry name" value="EF_Tu_B"/>
    <property type="match status" value="1"/>
</dbReference>
<dbReference type="InterPro" id="IPR041709">
    <property type="entry name" value="EF-Tu_GTP-bd"/>
</dbReference>
<dbReference type="InterPro" id="IPR050055">
    <property type="entry name" value="EF-Tu_GTPase"/>
</dbReference>
<dbReference type="InterPro" id="IPR004161">
    <property type="entry name" value="EFTu-like_2"/>
</dbReference>
<dbReference type="InterPro" id="IPR033720">
    <property type="entry name" value="EFTU_2"/>
</dbReference>
<dbReference type="InterPro" id="IPR031157">
    <property type="entry name" value="G_TR_CS"/>
</dbReference>
<dbReference type="InterPro" id="IPR027417">
    <property type="entry name" value="P-loop_NTPase"/>
</dbReference>
<dbReference type="InterPro" id="IPR005225">
    <property type="entry name" value="Small_GTP-bd"/>
</dbReference>
<dbReference type="InterPro" id="IPR000795">
    <property type="entry name" value="T_Tr_GTP-bd_dom"/>
</dbReference>
<dbReference type="InterPro" id="IPR009000">
    <property type="entry name" value="Transl_B-barrel_sf"/>
</dbReference>
<dbReference type="InterPro" id="IPR009001">
    <property type="entry name" value="Transl_elong_EF1A/Init_IF2_C"/>
</dbReference>
<dbReference type="InterPro" id="IPR004541">
    <property type="entry name" value="Transl_elong_EFTu/EF1A_bac/org"/>
</dbReference>
<dbReference type="InterPro" id="IPR004160">
    <property type="entry name" value="Transl_elong_EFTu/EF1A_C"/>
</dbReference>
<dbReference type="NCBIfam" id="TIGR00485">
    <property type="entry name" value="EF-Tu"/>
    <property type="match status" value="1"/>
</dbReference>
<dbReference type="NCBIfam" id="NF000766">
    <property type="entry name" value="PRK00049.1"/>
    <property type="match status" value="1"/>
</dbReference>
<dbReference type="NCBIfam" id="NF009372">
    <property type="entry name" value="PRK12735.1"/>
    <property type="match status" value="1"/>
</dbReference>
<dbReference type="NCBIfam" id="NF009373">
    <property type="entry name" value="PRK12736.1"/>
    <property type="match status" value="1"/>
</dbReference>
<dbReference type="NCBIfam" id="TIGR00231">
    <property type="entry name" value="small_GTP"/>
    <property type="match status" value="1"/>
</dbReference>
<dbReference type="PANTHER" id="PTHR43721:SF22">
    <property type="entry name" value="ELONGATION FACTOR TU, MITOCHONDRIAL"/>
    <property type="match status" value="1"/>
</dbReference>
<dbReference type="PANTHER" id="PTHR43721">
    <property type="entry name" value="ELONGATION FACTOR TU-RELATED"/>
    <property type="match status" value="1"/>
</dbReference>
<dbReference type="Pfam" id="PF00009">
    <property type="entry name" value="GTP_EFTU"/>
    <property type="match status" value="1"/>
</dbReference>
<dbReference type="Pfam" id="PF03144">
    <property type="entry name" value="GTP_EFTU_D2"/>
    <property type="match status" value="1"/>
</dbReference>
<dbReference type="Pfam" id="PF03143">
    <property type="entry name" value="GTP_EFTU_D3"/>
    <property type="match status" value="1"/>
</dbReference>
<dbReference type="PRINTS" id="PR00315">
    <property type="entry name" value="ELONGATNFCT"/>
</dbReference>
<dbReference type="SUPFAM" id="SSF50465">
    <property type="entry name" value="EF-Tu/eEF-1alpha/eIF2-gamma C-terminal domain"/>
    <property type="match status" value="1"/>
</dbReference>
<dbReference type="SUPFAM" id="SSF52540">
    <property type="entry name" value="P-loop containing nucleoside triphosphate hydrolases"/>
    <property type="match status" value="1"/>
</dbReference>
<dbReference type="SUPFAM" id="SSF50447">
    <property type="entry name" value="Translation proteins"/>
    <property type="match status" value="1"/>
</dbReference>
<dbReference type="PROSITE" id="PS00301">
    <property type="entry name" value="G_TR_1"/>
    <property type="match status" value="1"/>
</dbReference>
<dbReference type="PROSITE" id="PS51722">
    <property type="entry name" value="G_TR_2"/>
    <property type="match status" value="1"/>
</dbReference>
<proteinExistence type="inferred from homology"/>
<accession>B1JDW6</accession>
<organism>
    <name type="scientific">Pseudomonas putida (strain W619)</name>
    <dbReference type="NCBI Taxonomy" id="390235"/>
    <lineage>
        <taxon>Bacteria</taxon>
        <taxon>Pseudomonadati</taxon>
        <taxon>Pseudomonadota</taxon>
        <taxon>Gammaproteobacteria</taxon>
        <taxon>Pseudomonadales</taxon>
        <taxon>Pseudomonadaceae</taxon>
        <taxon>Pseudomonas</taxon>
    </lineage>
</organism>
<keyword id="KW-0963">Cytoplasm</keyword>
<keyword id="KW-0251">Elongation factor</keyword>
<keyword id="KW-0342">GTP-binding</keyword>
<keyword id="KW-0378">Hydrolase</keyword>
<keyword id="KW-0460">Magnesium</keyword>
<keyword id="KW-0479">Metal-binding</keyword>
<keyword id="KW-0547">Nucleotide-binding</keyword>
<keyword id="KW-0648">Protein biosynthesis</keyword>
<sequence>MAKEKFDRSLPHVNVGTIGHVDHGKTTLTAALTRVCSEVFGSAIVEFDKIDSAPEEKARGITINTAHVEYNSTIRHYAHVDCPGHADYVKNMITGAAQMDGAILVCSAADGPMPQTREHILLSRQVGVPYIVVFLNKADLVDDAELLELVEMEVRDLLSTYDFPGDDTPIIIGSARMALEGKDDNEMGTTAVKKLVETLDSYIPEPVRAIDQPFLMPIEDVFSISGRGTVVTGRIERGIVRVQDPLEIVGLRDTTTTTCTGVEMFRKLLDEGRAGENCGVLLRGTKRDDVERGQVLVKPGSVKPHTKFTAEVYVLSKEEGGRHTPFFKGYRPQFYFRTTDVTGNCELPEGVEMVMPGDNIQMTVTLIKTIAMEDGLRFAIREGGRTVGAGVVAKIIE</sequence>